<name>EFTU1_PELTS</name>
<organism>
    <name type="scientific">Pelotomaculum thermopropionicum (strain DSM 13744 / JCM 10971 / SI)</name>
    <dbReference type="NCBI Taxonomy" id="370438"/>
    <lineage>
        <taxon>Bacteria</taxon>
        <taxon>Bacillati</taxon>
        <taxon>Bacillota</taxon>
        <taxon>Clostridia</taxon>
        <taxon>Eubacteriales</taxon>
        <taxon>Desulfotomaculaceae</taxon>
        <taxon>Pelotomaculum</taxon>
    </lineage>
</organism>
<accession>A5D5K0</accession>
<reference key="1">
    <citation type="journal article" date="2008" name="Genome Res.">
        <title>The genome of Pelotomaculum thermopropionicum reveals niche-associated evolution in anaerobic microbiota.</title>
        <authorList>
            <person name="Kosaka T."/>
            <person name="Kato S."/>
            <person name="Shimoyama T."/>
            <person name="Ishii S."/>
            <person name="Abe T."/>
            <person name="Watanabe K."/>
        </authorList>
    </citation>
    <scope>NUCLEOTIDE SEQUENCE [LARGE SCALE GENOMIC DNA]</scope>
    <source>
        <strain>DSM 13744 / JCM 10971 / SI</strain>
    </source>
</reference>
<feature type="chain" id="PRO_0000337458" description="Elongation factor Tu 1">
    <location>
        <begin position="1"/>
        <end position="400"/>
    </location>
</feature>
<feature type="domain" description="tr-type G">
    <location>
        <begin position="10"/>
        <end position="209"/>
    </location>
</feature>
<feature type="region of interest" description="G1" evidence="1">
    <location>
        <begin position="19"/>
        <end position="26"/>
    </location>
</feature>
<feature type="region of interest" description="G2" evidence="1">
    <location>
        <begin position="60"/>
        <end position="64"/>
    </location>
</feature>
<feature type="region of interest" description="G3" evidence="1">
    <location>
        <begin position="81"/>
        <end position="84"/>
    </location>
</feature>
<feature type="region of interest" description="G4" evidence="1">
    <location>
        <begin position="136"/>
        <end position="139"/>
    </location>
</feature>
<feature type="region of interest" description="G5" evidence="1">
    <location>
        <begin position="174"/>
        <end position="176"/>
    </location>
</feature>
<feature type="binding site" evidence="2">
    <location>
        <begin position="19"/>
        <end position="26"/>
    </location>
    <ligand>
        <name>GTP</name>
        <dbReference type="ChEBI" id="CHEBI:37565"/>
    </ligand>
</feature>
<feature type="binding site" evidence="2">
    <location>
        <position position="26"/>
    </location>
    <ligand>
        <name>Mg(2+)</name>
        <dbReference type="ChEBI" id="CHEBI:18420"/>
    </ligand>
</feature>
<feature type="binding site" evidence="2">
    <location>
        <begin position="81"/>
        <end position="85"/>
    </location>
    <ligand>
        <name>GTP</name>
        <dbReference type="ChEBI" id="CHEBI:37565"/>
    </ligand>
</feature>
<feature type="binding site" evidence="2">
    <location>
        <begin position="136"/>
        <end position="139"/>
    </location>
    <ligand>
        <name>GTP</name>
        <dbReference type="ChEBI" id="CHEBI:37565"/>
    </ligand>
</feature>
<comment type="function">
    <text evidence="2">GTP hydrolase that promotes the GTP-dependent binding of aminoacyl-tRNA to the A-site of ribosomes during protein biosynthesis.</text>
</comment>
<comment type="catalytic activity">
    <reaction evidence="2">
        <text>GTP + H2O = GDP + phosphate + H(+)</text>
        <dbReference type="Rhea" id="RHEA:19669"/>
        <dbReference type="ChEBI" id="CHEBI:15377"/>
        <dbReference type="ChEBI" id="CHEBI:15378"/>
        <dbReference type="ChEBI" id="CHEBI:37565"/>
        <dbReference type="ChEBI" id="CHEBI:43474"/>
        <dbReference type="ChEBI" id="CHEBI:58189"/>
        <dbReference type="EC" id="3.6.5.3"/>
    </reaction>
    <physiologicalReaction direction="left-to-right" evidence="2">
        <dbReference type="Rhea" id="RHEA:19670"/>
    </physiologicalReaction>
</comment>
<comment type="subunit">
    <text evidence="2">Monomer.</text>
</comment>
<comment type="subcellular location">
    <subcellularLocation>
        <location evidence="2">Cytoplasm</location>
    </subcellularLocation>
</comment>
<comment type="similarity">
    <text evidence="2">Belongs to the TRAFAC class translation factor GTPase superfamily. Classic translation factor GTPase family. EF-Tu/EF-1A subfamily.</text>
</comment>
<protein>
    <recommendedName>
        <fullName evidence="2">Elongation factor Tu 1</fullName>
        <shortName evidence="2">EF-Tu 1</shortName>
        <ecNumber evidence="2">3.6.5.3</ecNumber>
    </recommendedName>
</protein>
<gene>
    <name evidence="2" type="primary">tuf1</name>
    <name type="synonym">tufB</name>
    <name type="ordered locus">PTH_0302</name>
</gene>
<dbReference type="EC" id="3.6.5.3" evidence="2"/>
<dbReference type="EMBL" id="AP009389">
    <property type="protein sequence ID" value="BAF58483.1"/>
    <property type="molecule type" value="Genomic_DNA"/>
</dbReference>
<dbReference type="SMR" id="A5D5K0"/>
<dbReference type="STRING" id="370438.PTH_0302"/>
<dbReference type="KEGG" id="pth:PTH_0302"/>
<dbReference type="eggNOG" id="COG0050">
    <property type="taxonomic scope" value="Bacteria"/>
</dbReference>
<dbReference type="HOGENOM" id="CLU_007265_0_0_9"/>
<dbReference type="Proteomes" id="UP000006556">
    <property type="component" value="Chromosome"/>
</dbReference>
<dbReference type="GO" id="GO:0005829">
    <property type="term" value="C:cytosol"/>
    <property type="evidence" value="ECO:0007669"/>
    <property type="project" value="TreeGrafter"/>
</dbReference>
<dbReference type="GO" id="GO:0005525">
    <property type="term" value="F:GTP binding"/>
    <property type="evidence" value="ECO:0007669"/>
    <property type="project" value="UniProtKB-UniRule"/>
</dbReference>
<dbReference type="GO" id="GO:0003924">
    <property type="term" value="F:GTPase activity"/>
    <property type="evidence" value="ECO:0007669"/>
    <property type="project" value="InterPro"/>
</dbReference>
<dbReference type="GO" id="GO:0003746">
    <property type="term" value="F:translation elongation factor activity"/>
    <property type="evidence" value="ECO:0007669"/>
    <property type="project" value="UniProtKB-UniRule"/>
</dbReference>
<dbReference type="CDD" id="cd01884">
    <property type="entry name" value="EF_Tu"/>
    <property type="match status" value="1"/>
</dbReference>
<dbReference type="CDD" id="cd03697">
    <property type="entry name" value="EFTU_II"/>
    <property type="match status" value="1"/>
</dbReference>
<dbReference type="CDD" id="cd03707">
    <property type="entry name" value="EFTU_III"/>
    <property type="match status" value="1"/>
</dbReference>
<dbReference type="FunFam" id="2.40.30.10:FF:000001">
    <property type="entry name" value="Elongation factor Tu"/>
    <property type="match status" value="1"/>
</dbReference>
<dbReference type="FunFam" id="3.40.50.300:FF:000003">
    <property type="entry name" value="Elongation factor Tu"/>
    <property type="match status" value="1"/>
</dbReference>
<dbReference type="Gene3D" id="3.40.50.300">
    <property type="entry name" value="P-loop containing nucleotide triphosphate hydrolases"/>
    <property type="match status" value="1"/>
</dbReference>
<dbReference type="Gene3D" id="2.40.30.10">
    <property type="entry name" value="Translation factors"/>
    <property type="match status" value="2"/>
</dbReference>
<dbReference type="HAMAP" id="MF_00118_B">
    <property type="entry name" value="EF_Tu_B"/>
    <property type="match status" value="1"/>
</dbReference>
<dbReference type="InterPro" id="IPR041709">
    <property type="entry name" value="EF-Tu_GTP-bd"/>
</dbReference>
<dbReference type="InterPro" id="IPR050055">
    <property type="entry name" value="EF-Tu_GTPase"/>
</dbReference>
<dbReference type="InterPro" id="IPR004161">
    <property type="entry name" value="EFTu-like_2"/>
</dbReference>
<dbReference type="InterPro" id="IPR033720">
    <property type="entry name" value="EFTU_2"/>
</dbReference>
<dbReference type="InterPro" id="IPR031157">
    <property type="entry name" value="G_TR_CS"/>
</dbReference>
<dbReference type="InterPro" id="IPR027417">
    <property type="entry name" value="P-loop_NTPase"/>
</dbReference>
<dbReference type="InterPro" id="IPR005225">
    <property type="entry name" value="Small_GTP-bd"/>
</dbReference>
<dbReference type="InterPro" id="IPR000795">
    <property type="entry name" value="T_Tr_GTP-bd_dom"/>
</dbReference>
<dbReference type="InterPro" id="IPR009000">
    <property type="entry name" value="Transl_B-barrel_sf"/>
</dbReference>
<dbReference type="InterPro" id="IPR009001">
    <property type="entry name" value="Transl_elong_EF1A/Init_IF2_C"/>
</dbReference>
<dbReference type="InterPro" id="IPR004541">
    <property type="entry name" value="Transl_elong_EFTu/EF1A_bac/org"/>
</dbReference>
<dbReference type="InterPro" id="IPR004160">
    <property type="entry name" value="Transl_elong_EFTu/EF1A_C"/>
</dbReference>
<dbReference type="NCBIfam" id="TIGR00485">
    <property type="entry name" value="EF-Tu"/>
    <property type="match status" value="1"/>
</dbReference>
<dbReference type="NCBIfam" id="NF000766">
    <property type="entry name" value="PRK00049.1"/>
    <property type="match status" value="1"/>
</dbReference>
<dbReference type="NCBIfam" id="NF009372">
    <property type="entry name" value="PRK12735.1"/>
    <property type="match status" value="1"/>
</dbReference>
<dbReference type="NCBIfam" id="NF009373">
    <property type="entry name" value="PRK12736.1"/>
    <property type="match status" value="1"/>
</dbReference>
<dbReference type="NCBIfam" id="TIGR00231">
    <property type="entry name" value="small_GTP"/>
    <property type="match status" value="1"/>
</dbReference>
<dbReference type="PANTHER" id="PTHR43721:SF22">
    <property type="entry name" value="ELONGATION FACTOR TU, MITOCHONDRIAL"/>
    <property type="match status" value="1"/>
</dbReference>
<dbReference type="PANTHER" id="PTHR43721">
    <property type="entry name" value="ELONGATION FACTOR TU-RELATED"/>
    <property type="match status" value="1"/>
</dbReference>
<dbReference type="Pfam" id="PF00009">
    <property type="entry name" value="GTP_EFTU"/>
    <property type="match status" value="1"/>
</dbReference>
<dbReference type="Pfam" id="PF03144">
    <property type="entry name" value="GTP_EFTU_D2"/>
    <property type="match status" value="1"/>
</dbReference>
<dbReference type="Pfam" id="PF03143">
    <property type="entry name" value="GTP_EFTU_D3"/>
    <property type="match status" value="1"/>
</dbReference>
<dbReference type="PRINTS" id="PR00315">
    <property type="entry name" value="ELONGATNFCT"/>
</dbReference>
<dbReference type="SUPFAM" id="SSF50465">
    <property type="entry name" value="EF-Tu/eEF-1alpha/eIF2-gamma C-terminal domain"/>
    <property type="match status" value="1"/>
</dbReference>
<dbReference type="SUPFAM" id="SSF52540">
    <property type="entry name" value="P-loop containing nucleoside triphosphate hydrolases"/>
    <property type="match status" value="1"/>
</dbReference>
<dbReference type="SUPFAM" id="SSF50447">
    <property type="entry name" value="Translation proteins"/>
    <property type="match status" value="1"/>
</dbReference>
<dbReference type="PROSITE" id="PS00301">
    <property type="entry name" value="G_TR_1"/>
    <property type="match status" value="1"/>
</dbReference>
<dbReference type="PROSITE" id="PS51722">
    <property type="entry name" value="G_TR_2"/>
    <property type="match status" value="1"/>
</dbReference>
<sequence length="400" mass="44158">MAKQKFERTKPHVNIGTIGHVDHGKTTLTAAITMVLATVGKAQVKKYDEIDNAPEERERGITINTAHVEYETEKRHYAHVDCPGHADYVKNMITGAAQMDGAILVVSAADGPMPQTREHILLARQVGVPYIVVYLNKADMVDDPELLELVDMEVRELLSTYEFPGDEIPIITGSALKAMECACGKRECEWCKSIWELMDAVDEYIPTPQRAVDKPFLMPVEDVFSITGRGTVATGRIERGQVKVGDEVEIVGLQDKPRKTVVTGVEMFRKILDVGVAGDNVGCLLRGVDRKEIERGQVLAKPGSIKPHKSFSAEVYVLTKEEGGRHTPFFNGYRPQFYFRTTDVTGVVKLPEGVEMVMPGDNVRIDIDLITPIAIEEGLRFAIREGGRTVGAGVVTGIRE</sequence>
<proteinExistence type="inferred from homology"/>
<evidence type="ECO:0000250" key="1"/>
<evidence type="ECO:0000255" key="2">
    <source>
        <dbReference type="HAMAP-Rule" id="MF_00118"/>
    </source>
</evidence>
<keyword id="KW-0963">Cytoplasm</keyword>
<keyword id="KW-0251">Elongation factor</keyword>
<keyword id="KW-0342">GTP-binding</keyword>
<keyword id="KW-0378">Hydrolase</keyword>
<keyword id="KW-0460">Magnesium</keyword>
<keyword id="KW-0479">Metal-binding</keyword>
<keyword id="KW-0547">Nucleotide-binding</keyword>
<keyword id="KW-0648">Protein biosynthesis</keyword>
<keyword id="KW-1185">Reference proteome</keyword>